<evidence type="ECO:0000255" key="1">
    <source>
        <dbReference type="HAMAP-Rule" id="MF_00110"/>
    </source>
</evidence>
<reference key="1">
    <citation type="submission" date="2009-01" db="EMBL/GenBank/DDBJ databases">
        <title>Complete sequence of Clostridium cellulolyticum H10.</title>
        <authorList>
            <consortium name="US DOE Joint Genome Institute"/>
            <person name="Lucas S."/>
            <person name="Copeland A."/>
            <person name="Lapidus A."/>
            <person name="Glavina del Rio T."/>
            <person name="Dalin E."/>
            <person name="Tice H."/>
            <person name="Bruce D."/>
            <person name="Goodwin L."/>
            <person name="Pitluck S."/>
            <person name="Chertkov O."/>
            <person name="Saunders E."/>
            <person name="Brettin T."/>
            <person name="Detter J.C."/>
            <person name="Han C."/>
            <person name="Larimer F."/>
            <person name="Land M."/>
            <person name="Hauser L."/>
            <person name="Kyrpides N."/>
            <person name="Ivanova N."/>
            <person name="Zhou J."/>
            <person name="Richardson P."/>
        </authorList>
    </citation>
    <scope>NUCLEOTIDE SEQUENCE [LARGE SCALE GENOMIC DNA]</scope>
    <source>
        <strain>ATCC 35319 / DSM 5812 / JCM 6584 / H10</strain>
    </source>
</reference>
<keyword id="KW-0028">Amino-acid biosynthesis</keyword>
<keyword id="KW-0057">Aromatic amino acid biosynthesis</keyword>
<keyword id="KW-0170">Cobalt</keyword>
<keyword id="KW-0963">Cytoplasm</keyword>
<keyword id="KW-0456">Lyase</keyword>
<keyword id="KW-0479">Metal-binding</keyword>
<keyword id="KW-0520">NAD</keyword>
<keyword id="KW-0547">Nucleotide-binding</keyword>
<keyword id="KW-1185">Reference proteome</keyword>
<keyword id="KW-0862">Zinc</keyword>
<name>AROB_RUMCH</name>
<comment type="function">
    <text evidence="1">Catalyzes the conversion of 3-deoxy-D-arabino-heptulosonate 7-phosphate (DAHP) to dehydroquinate (DHQ).</text>
</comment>
<comment type="catalytic activity">
    <reaction evidence="1">
        <text>7-phospho-2-dehydro-3-deoxy-D-arabino-heptonate = 3-dehydroquinate + phosphate</text>
        <dbReference type="Rhea" id="RHEA:21968"/>
        <dbReference type="ChEBI" id="CHEBI:32364"/>
        <dbReference type="ChEBI" id="CHEBI:43474"/>
        <dbReference type="ChEBI" id="CHEBI:58394"/>
        <dbReference type="EC" id="4.2.3.4"/>
    </reaction>
</comment>
<comment type="cofactor">
    <cofactor evidence="1">
        <name>Co(2+)</name>
        <dbReference type="ChEBI" id="CHEBI:48828"/>
    </cofactor>
    <cofactor evidence="1">
        <name>Zn(2+)</name>
        <dbReference type="ChEBI" id="CHEBI:29105"/>
    </cofactor>
    <text evidence="1">Binds 1 divalent metal cation per subunit. Can use either Co(2+) or Zn(2+).</text>
</comment>
<comment type="cofactor">
    <cofactor evidence="1">
        <name>NAD(+)</name>
        <dbReference type="ChEBI" id="CHEBI:57540"/>
    </cofactor>
</comment>
<comment type="pathway">
    <text evidence="1">Metabolic intermediate biosynthesis; chorismate biosynthesis; chorismate from D-erythrose 4-phosphate and phosphoenolpyruvate: step 2/7.</text>
</comment>
<comment type="subcellular location">
    <subcellularLocation>
        <location evidence="1">Cytoplasm</location>
    </subcellularLocation>
</comment>
<comment type="similarity">
    <text evidence="1">Belongs to the sugar phosphate cyclases superfamily. Dehydroquinate synthase family.</text>
</comment>
<organism>
    <name type="scientific">Ruminiclostridium cellulolyticum (strain ATCC 35319 / DSM 5812 / JCM 6584 / H10)</name>
    <name type="common">Clostridium cellulolyticum</name>
    <dbReference type="NCBI Taxonomy" id="394503"/>
    <lineage>
        <taxon>Bacteria</taxon>
        <taxon>Bacillati</taxon>
        <taxon>Bacillota</taxon>
        <taxon>Clostridia</taxon>
        <taxon>Eubacteriales</taxon>
        <taxon>Oscillospiraceae</taxon>
        <taxon>Ruminiclostridium</taxon>
    </lineage>
</organism>
<protein>
    <recommendedName>
        <fullName evidence="1">3-dehydroquinate synthase</fullName>
        <shortName evidence="1">DHQS</shortName>
        <ecNumber evidence="1">4.2.3.4</ecNumber>
    </recommendedName>
</protein>
<proteinExistence type="inferred from homology"/>
<feature type="chain" id="PRO_1000119078" description="3-dehydroquinate synthase">
    <location>
        <begin position="1"/>
        <end position="359"/>
    </location>
</feature>
<feature type="binding site" evidence="1">
    <location>
        <begin position="105"/>
        <end position="109"/>
    </location>
    <ligand>
        <name>NAD(+)</name>
        <dbReference type="ChEBI" id="CHEBI:57540"/>
    </ligand>
</feature>
<feature type="binding site" evidence="1">
    <location>
        <begin position="129"/>
        <end position="130"/>
    </location>
    <ligand>
        <name>NAD(+)</name>
        <dbReference type="ChEBI" id="CHEBI:57540"/>
    </ligand>
</feature>
<feature type="binding site" evidence="1">
    <location>
        <position position="142"/>
    </location>
    <ligand>
        <name>NAD(+)</name>
        <dbReference type="ChEBI" id="CHEBI:57540"/>
    </ligand>
</feature>
<feature type="binding site" evidence="1">
    <location>
        <position position="151"/>
    </location>
    <ligand>
        <name>NAD(+)</name>
        <dbReference type="ChEBI" id="CHEBI:57540"/>
    </ligand>
</feature>
<feature type="binding site" evidence="1">
    <location>
        <begin position="169"/>
        <end position="172"/>
    </location>
    <ligand>
        <name>NAD(+)</name>
        <dbReference type="ChEBI" id="CHEBI:57540"/>
    </ligand>
</feature>
<feature type="binding site" evidence="1">
    <location>
        <position position="184"/>
    </location>
    <ligand>
        <name>Zn(2+)</name>
        <dbReference type="ChEBI" id="CHEBI:29105"/>
    </ligand>
</feature>
<feature type="binding site" evidence="1">
    <location>
        <position position="247"/>
    </location>
    <ligand>
        <name>Zn(2+)</name>
        <dbReference type="ChEBI" id="CHEBI:29105"/>
    </ligand>
</feature>
<feature type="binding site" evidence="1">
    <location>
        <position position="263"/>
    </location>
    <ligand>
        <name>Zn(2+)</name>
        <dbReference type="ChEBI" id="CHEBI:29105"/>
    </ligand>
</feature>
<accession>B8I359</accession>
<gene>
    <name evidence="1" type="primary">aroB</name>
    <name type="ordered locus">Ccel_1854</name>
</gene>
<dbReference type="EC" id="4.2.3.4" evidence="1"/>
<dbReference type="EMBL" id="CP001348">
    <property type="protein sequence ID" value="ACL76202.1"/>
    <property type="molecule type" value="Genomic_DNA"/>
</dbReference>
<dbReference type="RefSeq" id="WP_015925307.1">
    <property type="nucleotide sequence ID" value="NC_011898.1"/>
</dbReference>
<dbReference type="SMR" id="B8I359"/>
<dbReference type="STRING" id="394503.Ccel_1854"/>
<dbReference type="KEGG" id="cce:Ccel_1854"/>
<dbReference type="eggNOG" id="COG0337">
    <property type="taxonomic scope" value="Bacteria"/>
</dbReference>
<dbReference type="HOGENOM" id="CLU_001201_0_2_9"/>
<dbReference type="OrthoDB" id="9806583at2"/>
<dbReference type="UniPathway" id="UPA00053">
    <property type="reaction ID" value="UER00085"/>
</dbReference>
<dbReference type="Proteomes" id="UP000001349">
    <property type="component" value="Chromosome"/>
</dbReference>
<dbReference type="GO" id="GO:0005737">
    <property type="term" value="C:cytoplasm"/>
    <property type="evidence" value="ECO:0007669"/>
    <property type="project" value="UniProtKB-SubCell"/>
</dbReference>
<dbReference type="GO" id="GO:0003856">
    <property type="term" value="F:3-dehydroquinate synthase activity"/>
    <property type="evidence" value="ECO:0007669"/>
    <property type="project" value="UniProtKB-UniRule"/>
</dbReference>
<dbReference type="GO" id="GO:0046872">
    <property type="term" value="F:metal ion binding"/>
    <property type="evidence" value="ECO:0007669"/>
    <property type="project" value="UniProtKB-KW"/>
</dbReference>
<dbReference type="GO" id="GO:0000166">
    <property type="term" value="F:nucleotide binding"/>
    <property type="evidence" value="ECO:0007669"/>
    <property type="project" value="UniProtKB-KW"/>
</dbReference>
<dbReference type="GO" id="GO:0008652">
    <property type="term" value="P:amino acid biosynthetic process"/>
    <property type="evidence" value="ECO:0007669"/>
    <property type="project" value="UniProtKB-KW"/>
</dbReference>
<dbReference type="GO" id="GO:0009073">
    <property type="term" value="P:aromatic amino acid family biosynthetic process"/>
    <property type="evidence" value="ECO:0007669"/>
    <property type="project" value="UniProtKB-KW"/>
</dbReference>
<dbReference type="GO" id="GO:0009423">
    <property type="term" value="P:chorismate biosynthetic process"/>
    <property type="evidence" value="ECO:0007669"/>
    <property type="project" value="UniProtKB-UniRule"/>
</dbReference>
<dbReference type="CDD" id="cd08195">
    <property type="entry name" value="DHQS"/>
    <property type="match status" value="1"/>
</dbReference>
<dbReference type="FunFam" id="3.40.50.1970:FF:000007">
    <property type="entry name" value="Pentafunctional AROM polypeptide"/>
    <property type="match status" value="1"/>
</dbReference>
<dbReference type="Gene3D" id="3.40.50.1970">
    <property type="match status" value="1"/>
</dbReference>
<dbReference type="Gene3D" id="1.20.1090.10">
    <property type="entry name" value="Dehydroquinate synthase-like - alpha domain"/>
    <property type="match status" value="1"/>
</dbReference>
<dbReference type="HAMAP" id="MF_00110">
    <property type="entry name" value="DHQ_synthase"/>
    <property type="match status" value="1"/>
</dbReference>
<dbReference type="InterPro" id="IPR050071">
    <property type="entry name" value="Dehydroquinate_synthase"/>
</dbReference>
<dbReference type="InterPro" id="IPR016037">
    <property type="entry name" value="DHQ_synth_AroB"/>
</dbReference>
<dbReference type="InterPro" id="IPR030963">
    <property type="entry name" value="DHQ_synth_fam"/>
</dbReference>
<dbReference type="InterPro" id="IPR030960">
    <property type="entry name" value="DHQS/DOIS_N"/>
</dbReference>
<dbReference type="InterPro" id="IPR056179">
    <property type="entry name" value="DHQS_C"/>
</dbReference>
<dbReference type="NCBIfam" id="TIGR01357">
    <property type="entry name" value="aroB"/>
    <property type="match status" value="1"/>
</dbReference>
<dbReference type="PANTHER" id="PTHR43622">
    <property type="entry name" value="3-DEHYDROQUINATE SYNTHASE"/>
    <property type="match status" value="1"/>
</dbReference>
<dbReference type="PANTHER" id="PTHR43622:SF7">
    <property type="entry name" value="3-DEHYDROQUINATE SYNTHASE, CHLOROPLASTIC"/>
    <property type="match status" value="1"/>
</dbReference>
<dbReference type="Pfam" id="PF01761">
    <property type="entry name" value="DHQ_synthase"/>
    <property type="match status" value="1"/>
</dbReference>
<dbReference type="Pfam" id="PF24621">
    <property type="entry name" value="DHQS_C"/>
    <property type="match status" value="1"/>
</dbReference>
<dbReference type="PIRSF" id="PIRSF001455">
    <property type="entry name" value="DHQ_synth"/>
    <property type="match status" value="1"/>
</dbReference>
<dbReference type="SUPFAM" id="SSF56796">
    <property type="entry name" value="Dehydroquinate synthase-like"/>
    <property type="match status" value="1"/>
</dbReference>
<sequence length="359" mass="40239">MIRHTINLKERSYPICIATDFQELGKTVLSFRQGNKALLITDENVDNYYSDECMKVLQVSGIEVNKHVLKPGESNKTLEAVYGIYNKMVECKLDRSSIVLALGGGVVGDIAGFAAATYMRGINFVQIPTTLLAQADSSVGGKTGVDFNGHKNIVGAFYQPKAVFINVNTIKTLPKREISAGLAEVIKHGLIMDEEYCDYINYNADKIFKFDENVLQYLAKKNCSIKGYVVEQDEKEDDLRAILNFGHTIGHAIETVENFRLLHGECVSIGIVGVYKIAQYMEVLSEQLVNQVKEILLKLGLPVSLPGLDVERVYNQIFYDKKVKDNKLKFVLPRRIGEVFQCTIKDNELIKKVLLDLSN</sequence>